<protein>
    <recommendedName>
        <fullName evidence="1">Glutamyl-tRNA(Gln) amidotransferase subunit A</fullName>
        <shortName evidence="1">Glu-ADT subunit A</shortName>
        <ecNumber evidence="1">6.3.5.7</ecNumber>
    </recommendedName>
</protein>
<organism>
    <name type="scientific">Afipia carboxidovorans (strain ATCC 49405 / DSM 1227 / KCTC 32145 / OM5)</name>
    <name type="common">Oligotropha carboxidovorans</name>
    <dbReference type="NCBI Taxonomy" id="504832"/>
    <lineage>
        <taxon>Bacteria</taxon>
        <taxon>Pseudomonadati</taxon>
        <taxon>Pseudomonadota</taxon>
        <taxon>Alphaproteobacteria</taxon>
        <taxon>Hyphomicrobiales</taxon>
        <taxon>Nitrobacteraceae</taxon>
        <taxon>Afipia</taxon>
    </lineage>
</organism>
<name>GATA_AFIC5</name>
<sequence length="491" mass="52568">MTDLTALTLADAKEGLAAKSFTALELTDAHLAAMESARVLNAYVLETPDKARAMAKEADTRIAKGERSNLLGIPLGIKDLFATRDVRLTACSKILDDFKPPYESTITSQLWRDGAVLLGKLNNDEFAMGSSNETSAFGNVINPWRREGSDTALVPGGSSGGSAAAVAAGLCLGATGTDTGGSIRQPAAFTGIVGIKPTYGRCSRWGVVAFASSLDQAGPFARTVRDSAILLRSMAGHDPKDTTSVDRDVPDYEAAIGKSVKGMRIGIPREYRIGGMSSEIEKLWAQGAEWLKAAGAEIVEISLPHTKYALPAYYVVAPAEASSNLARYDGVRYGARVNGKTIAEMYENTRAAGFGPEVRRRIMIGTYVLSAGYYDAYYLRAQKVRTLIKRDFEEVFAKGIDAILTPATPSAAFGIGEKGKADPVEMYLNDIFTVTVNMAGLPGIAVPAGKDAQGLPLALQLIGRPFDEETLFSLGETIEQAAGRFEPKRWW</sequence>
<reference key="1">
    <citation type="journal article" date="2008" name="J. Bacteriol.">
        <title>Genome sequence of the chemolithoautotrophic bacterium Oligotropha carboxidovorans OM5T.</title>
        <authorList>
            <person name="Paul D."/>
            <person name="Bridges S."/>
            <person name="Burgess S.C."/>
            <person name="Dandass Y."/>
            <person name="Lawrence M.L."/>
        </authorList>
    </citation>
    <scope>NUCLEOTIDE SEQUENCE [LARGE SCALE GENOMIC DNA]</scope>
    <source>
        <strain>ATCC 49405 / DSM 1227 / KCTC 32145 / OM5</strain>
    </source>
</reference>
<reference key="2">
    <citation type="journal article" date="2011" name="J. Bacteriol.">
        <title>Complete genome sequences of the chemolithoautotrophic Oligotropha carboxidovorans strains OM4 and OM5.</title>
        <authorList>
            <person name="Volland S."/>
            <person name="Rachinger M."/>
            <person name="Strittmatter A."/>
            <person name="Daniel R."/>
            <person name="Gottschalk G."/>
            <person name="Meyer O."/>
        </authorList>
    </citation>
    <scope>NUCLEOTIDE SEQUENCE [LARGE SCALE GENOMIC DNA]</scope>
    <source>
        <strain>ATCC 49405 / DSM 1227 / KCTC 32145 / OM5</strain>
    </source>
</reference>
<comment type="function">
    <text evidence="1">Allows the formation of correctly charged Gln-tRNA(Gln) through the transamidation of misacylated Glu-tRNA(Gln) in organisms which lack glutaminyl-tRNA synthetase. The reaction takes place in the presence of glutamine and ATP through an activated gamma-phospho-Glu-tRNA(Gln).</text>
</comment>
<comment type="catalytic activity">
    <reaction evidence="1">
        <text>L-glutamyl-tRNA(Gln) + L-glutamine + ATP + H2O = L-glutaminyl-tRNA(Gln) + L-glutamate + ADP + phosphate + H(+)</text>
        <dbReference type="Rhea" id="RHEA:17521"/>
        <dbReference type="Rhea" id="RHEA-COMP:9681"/>
        <dbReference type="Rhea" id="RHEA-COMP:9684"/>
        <dbReference type="ChEBI" id="CHEBI:15377"/>
        <dbReference type="ChEBI" id="CHEBI:15378"/>
        <dbReference type="ChEBI" id="CHEBI:29985"/>
        <dbReference type="ChEBI" id="CHEBI:30616"/>
        <dbReference type="ChEBI" id="CHEBI:43474"/>
        <dbReference type="ChEBI" id="CHEBI:58359"/>
        <dbReference type="ChEBI" id="CHEBI:78520"/>
        <dbReference type="ChEBI" id="CHEBI:78521"/>
        <dbReference type="ChEBI" id="CHEBI:456216"/>
        <dbReference type="EC" id="6.3.5.7"/>
    </reaction>
</comment>
<comment type="subunit">
    <text evidence="1">Heterotrimer of A, B and C subunits.</text>
</comment>
<comment type="similarity">
    <text evidence="1">Belongs to the amidase family. GatA subfamily.</text>
</comment>
<accession>B6JFW2</accession>
<accession>F8BY72</accession>
<gene>
    <name evidence="1" type="primary">gatA</name>
    <name type="ordered locus">OCAR_5796</name>
    <name type="ordered locus">OCA5_c22150</name>
</gene>
<keyword id="KW-0067">ATP-binding</keyword>
<keyword id="KW-0436">Ligase</keyword>
<keyword id="KW-0547">Nucleotide-binding</keyword>
<keyword id="KW-0648">Protein biosynthesis</keyword>
<keyword id="KW-1185">Reference proteome</keyword>
<dbReference type="EC" id="6.3.5.7" evidence="1"/>
<dbReference type="EMBL" id="CP001196">
    <property type="protein sequence ID" value="ACI92922.1"/>
    <property type="molecule type" value="Genomic_DNA"/>
</dbReference>
<dbReference type="EMBL" id="CP002826">
    <property type="protein sequence ID" value="AEI06917.1"/>
    <property type="molecule type" value="Genomic_DNA"/>
</dbReference>
<dbReference type="RefSeq" id="WP_012562950.1">
    <property type="nucleotide sequence ID" value="NC_015684.1"/>
</dbReference>
<dbReference type="SMR" id="B6JFW2"/>
<dbReference type="STRING" id="504832.OCA5_c22150"/>
<dbReference type="KEGG" id="oca:OCAR_5796"/>
<dbReference type="KEGG" id="ocg:OCA5_c22150"/>
<dbReference type="PATRIC" id="fig|504832.7.peg.2338"/>
<dbReference type="eggNOG" id="COG0154">
    <property type="taxonomic scope" value="Bacteria"/>
</dbReference>
<dbReference type="HOGENOM" id="CLU_009600_0_3_5"/>
<dbReference type="OrthoDB" id="9811471at2"/>
<dbReference type="Proteomes" id="UP000007730">
    <property type="component" value="Chromosome"/>
</dbReference>
<dbReference type="GO" id="GO:0030956">
    <property type="term" value="C:glutamyl-tRNA(Gln) amidotransferase complex"/>
    <property type="evidence" value="ECO:0007669"/>
    <property type="project" value="InterPro"/>
</dbReference>
<dbReference type="GO" id="GO:0005524">
    <property type="term" value="F:ATP binding"/>
    <property type="evidence" value="ECO:0007669"/>
    <property type="project" value="UniProtKB-KW"/>
</dbReference>
<dbReference type="GO" id="GO:0050567">
    <property type="term" value="F:glutaminyl-tRNA synthase (glutamine-hydrolyzing) activity"/>
    <property type="evidence" value="ECO:0007669"/>
    <property type="project" value="UniProtKB-UniRule"/>
</dbReference>
<dbReference type="GO" id="GO:0006412">
    <property type="term" value="P:translation"/>
    <property type="evidence" value="ECO:0007669"/>
    <property type="project" value="UniProtKB-UniRule"/>
</dbReference>
<dbReference type="Gene3D" id="3.90.1300.10">
    <property type="entry name" value="Amidase signature (AS) domain"/>
    <property type="match status" value="1"/>
</dbReference>
<dbReference type="HAMAP" id="MF_00120">
    <property type="entry name" value="GatA"/>
    <property type="match status" value="1"/>
</dbReference>
<dbReference type="InterPro" id="IPR000120">
    <property type="entry name" value="Amidase"/>
</dbReference>
<dbReference type="InterPro" id="IPR020556">
    <property type="entry name" value="Amidase_CS"/>
</dbReference>
<dbReference type="InterPro" id="IPR023631">
    <property type="entry name" value="Amidase_dom"/>
</dbReference>
<dbReference type="InterPro" id="IPR036928">
    <property type="entry name" value="AS_sf"/>
</dbReference>
<dbReference type="InterPro" id="IPR004412">
    <property type="entry name" value="GatA"/>
</dbReference>
<dbReference type="NCBIfam" id="TIGR00132">
    <property type="entry name" value="gatA"/>
    <property type="match status" value="1"/>
</dbReference>
<dbReference type="PANTHER" id="PTHR11895:SF151">
    <property type="entry name" value="GLUTAMYL-TRNA(GLN) AMIDOTRANSFERASE SUBUNIT A"/>
    <property type="match status" value="1"/>
</dbReference>
<dbReference type="PANTHER" id="PTHR11895">
    <property type="entry name" value="TRANSAMIDASE"/>
    <property type="match status" value="1"/>
</dbReference>
<dbReference type="Pfam" id="PF01425">
    <property type="entry name" value="Amidase"/>
    <property type="match status" value="1"/>
</dbReference>
<dbReference type="SUPFAM" id="SSF75304">
    <property type="entry name" value="Amidase signature (AS) enzymes"/>
    <property type="match status" value="1"/>
</dbReference>
<dbReference type="PROSITE" id="PS00571">
    <property type="entry name" value="AMIDASES"/>
    <property type="match status" value="1"/>
</dbReference>
<proteinExistence type="inferred from homology"/>
<feature type="chain" id="PRO_1000095156" description="Glutamyl-tRNA(Gln) amidotransferase subunit A">
    <location>
        <begin position="1"/>
        <end position="491"/>
    </location>
</feature>
<feature type="active site" description="Charge relay system" evidence="1">
    <location>
        <position position="78"/>
    </location>
</feature>
<feature type="active site" description="Charge relay system" evidence="1">
    <location>
        <position position="158"/>
    </location>
</feature>
<feature type="active site" description="Acyl-ester intermediate" evidence="1">
    <location>
        <position position="182"/>
    </location>
</feature>
<evidence type="ECO:0000255" key="1">
    <source>
        <dbReference type="HAMAP-Rule" id="MF_00120"/>
    </source>
</evidence>